<evidence type="ECO:0000250" key="1"/>
<evidence type="ECO:0000255" key="2"/>
<evidence type="ECO:0000269" key="3">
    <source>
    </source>
</evidence>
<evidence type="ECO:0000269" key="4">
    <source>
    </source>
</evidence>
<evidence type="ECO:0000269" key="5">
    <source>
    </source>
</evidence>
<evidence type="ECO:0000305" key="6"/>
<evidence type="ECO:0007744" key="7">
    <source>
    </source>
</evidence>
<dbReference type="EMBL" id="AK090775">
    <property type="protein sequence ID" value="BAC03517.1"/>
    <property type="molecule type" value="mRNA"/>
</dbReference>
<dbReference type="EMBL" id="AK292736">
    <property type="protein sequence ID" value="BAF85425.1"/>
    <property type="molecule type" value="mRNA"/>
</dbReference>
<dbReference type="EMBL" id="AL161621">
    <property type="status" value="NOT_ANNOTATED_CDS"/>
    <property type="molecule type" value="Genomic_DNA"/>
</dbReference>
<dbReference type="EMBL" id="CH471051">
    <property type="protein sequence ID" value="EAW48646.1"/>
    <property type="molecule type" value="Genomic_DNA"/>
</dbReference>
<dbReference type="EMBL" id="BC010003">
    <property type="protein sequence ID" value="AAH10003.2"/>
    <property type="molecule type" value="mRNA"/>
</dbReference>
<dbReference type="EMBL" id="BC039855">
    <property type="protein sequence ID" value="AAH39855.1"/>
    <property type="molecule type" value="mRNA"/>
</dbReference>
<dbReference type="CCDS" id="CCDS5001.1"/>
<dbReference type="RefSeq" id="NP_001333470.1">
    <property type="nucleotide sequence ID" value="NM_001346541.1"/>
</dbReference>
<dbReference type="RefSeq" id="NP_001333471.1">
    <property type="nucleotide sequence ID" value="NM_001346542.2"/>
</dbReference>
<dbReference type="RefSeq" id="NP_001333473.1">
    <property type="nucleotide sequence ID" value="NM_001346544.2"/>
</dbReference>
<dbReference type="RefSeq" id="NP_612418.2">
    <property type="nucleotide sequence ID" value="NM_138409.4"/>
</dbReference>
<dbReference type="RefSeq" id="XP_016865709.1">
    <property type="nucleotide sequence ID" value="XM_017010220.2"/>
</dbReference>
<dbReference type="RefSeq" id="XP_054210107.1">
    <property type="nucleotide sequence ID" value="XM_054354132.1"/>
</dbReference>
<dbReference type="SMR" id="Q96G30"/>
<dbReference type="BioGRID" id="125195">
    <property type="interactions" value="77"/>
</dbReference>
<dbReference type="CORUM" id="Q96G30"/>
<dbReference type="DIP" id="DIP-48793N"/>
<dbReference type="FunCoup" id="Q96G30">
    <property type="interactions" value="534"/>
</dbReference>
<dbReference type="IntAct" id="Q96G30">
    <property type="interactions" value="82"/>
</dbReference>
<dbReference type="MINT" id="Q96G30"/>
<dbReference type="STRING" id="9606.ENSP00000257776"/>
<dbReference type="GlyCosmos" id="Q96G30">
    <property type="glycosylation" value="1 site, No reported glycans"/>
</dbReference>
<dbReference type="GlyGen" id="Q96G30">
    <property type="glycosylation" value="1 site"/>
</dbReference>
<dbReference type="iPTMnet" id="Q96G30"/>
<dbReference type="PhosphoSitePlus" id="Q96G30"/>
<dbReference type="BioMuta" id="MRAP2"/>
<dbReference type="DMDM" id="68565259"/>
<dbReference type="PaxDb" id="9606-ENSP00000257776"/>
<dbReference type="PeptideAtlas" id="Q96G30"/>
<dbReference type="ProteomicsDB" id="76591"/>
<dbReference type="Antibodypedia" id="2456">
    <property type="antibodies" value="118 antibodies from 20 providers"/>
</dbReference>
<dbReference type="DNASU" id="112609"/>
<dbReference type="Ensembl" id="ENST00000257776.5">
    <property type="protein sequence ID" value="ENSP00000257776.4"/>
    <property type="gene ID" value="ENSG00000135324.6"/>
</dbReference>
<dbReference type="GeneID" id="112609"/>
<dbReference type="KEGG" id="hsa:112609"/>
<dbReference type="MANE-Select" id="ENST00000257776.5">
    <property type="protein sequence ID" value="ENSP00000257776.4"/>
    <property type="RefSeq nucleotide sequence ID" value="NM_138409.4"/>
    <property type="RefSeq protein sequence ID" value="NP_612418.2"/>
</dbReference>
<dbReference type="UCSC" id="uc003pkg.5">
    <property type="organism name" value="human"/>
</dbReference>
<dbReference type="AGR" id="HGNC:21232"/>
<dbReference type="CTD" id="112609"/>
<dbReference type="DisGeNET" id="112609"/>
<dbReference type="GeneCards" id="MRAP2"/>
<dbReference type="HGNC" id="HGNC:21232">
    <property type="gene designation" value="MRAP2"/>
</dbReference>
<dbReference type="HPA" id="ENSG00000135324">
    <property type="expression patterns" value="Tissue enhanced (brain)"/>
</dbReference>
<dbReference type="MalaCards" id="MRAP2"/>
<dbReference type="MIM" id="601665">
    <property type="type" value="phenotype"/>
</dbReference>
<dbReference type="MIM" id="615410">
    <property type="type" value="gene"/>
</dbReference>
<dbReference type="MIM" id="615457">
    <property type="type" value="phenotype"/>
</dbReference>
<dbReference type="neXtProt" id="NX_Q96G30"/>
<dbReference type="OpenTargets" id="ENSG00000135324"/>
<dbReference type="PharmGKB" id="PA162396161"/>
<dbReference type="VEuPathDB" id="HostDB:ENSG00000135324"/>
<dbReference type="eggNOG" id="ENOG502RYQM">
    <property type="taxonomic scope" value="Eukaryota"/>
</dbReference>
<dbReference type="GeneTree" id="ENSGT00650000093438"/>
<dbReference type="HOGENOM" id="CLU_110753_0_0_1"/>
<dbReference type="InParanoid" id="Q96G30"/>
<dbReference type="OMA" id="WDYEYYE"/>
<dbReference type="OrthoDB" id="9904651at2759"/>
<dbReference type="PAN-GO" id="Q96G30">
    <property type="GO annotations" value="10 GO annotations based on evolutionary models"/>
</dbReference>
<dbReference type="PhylomeDB" id="Q96G30"/>
<dbReference type="TreeFam" id="TF338691"/>
<dbReference type="PathwayCommons" id="Q96G30"/>
<dbReference type="SignaLink" id="Q96G30"/>
<dbReference type="SIGNOR" id="Q96G30"/>
<dbReference type="BioGRID-ORCS" id="112609">
    <property type="hits" value="14 hits in 1157 CRISPR screens"/>
</dbReference>
<dbReference type="GenomeRNAi" id="112609"/>
<dbReference type="Pharos" id="Q96G30">
    <property type="development level" value="Tbio"/>
</dbReference>
<dbReference type="PRO" id="PR:Q96G30"/>
<dbReference type="Proteomes" id="UP000005640">
    <property type="component" value="Chromosome 6"/>
</dbReference>
<dbReference type="RNAct" id="Q96G30">
    <property type="molecule type" value="protein"/>
</dbReference>
<dbReference type="Bgee" id="ENSG00000135324">
    <property type="expression patterns" value="Expressed in lateral nuclear group of thalamus and 143 other cell types or tissues"/>
</dbReference>
<dbReference type="GO" id="GO:0005783">
    <property type="term" value="C:endoplasmic reticulum"/>
    <property type="evidence" value="ECO:0000314"/>
    <property type="project" value="BHF-UCL"/>
</dbReference>
<dbReference type="GO" id="GO:0005789">
    <property type="term" value="C:endoplasmic reticulum membrane"/>
    <property type="evidence" value="ECO:0007669"/>
    <property type="project" value="UniProtKB-SubCell"/>
</dbReference>
<dbReference type="GO" id="GO:0005886">
    <property type="term" value="C:plasma membrane"/>
    <property type="evidence" value="ECO:0000314"/>
    <property type="project" value="BHF-UCL"/>
</dbReference>
<dbReference type="GO" id="GO:0031780">
    <property type="term" value="F:corticotropin hormone receptor binding"/>
    <property type="evidence" value="ECO:0000353"/>
    <property type="project" value="BHF-UCL"/>
</dbReference>
<dbReference type="GO" id="GO:0042802">
    <property type="term" value="F:identical protein binding"/>
    <property type="evidence" value="ECO:0000353"/>
    <property type="project" value="IntAct"/>
</dbReference>
<dbReference type="GO" id="GO:0030545">
    <property type="term" value="F:signaling receptor regulator activity"/>
    <property type="evidence" value="ECO:0000318"/>
    <property type="project" value="GO_Central"/>
</dbReference>
<dbReference type="GO" id="GO:0070996">
    <property type="term" value="F:type 1 melanocortin receptor binding"/>
    <property type="evidence" value="ECO:0000353"/>
    <property type="project" value="BHF-UCL"/>
</dbReference>
<dbReference type="GO" id="GO:0031781">
    <property type="term" value="F:type 3 melanocortin receptor binding"/>
    <property type="evidence" value="ECO:0000353"/>
    <property type="project" value="BHF-UCL"/>
</dbReference>
<dbReference type="GO" id="GO:0031782">
    <property type="term" value="F:type 4 melanocortin receptor binding"/>
    <property type="evidence" value="ECO:0000353"/>
    <property type="project" value="BHF-UCL"/>
</dbReference>
<dbReference type="GO" id="GO:0031783">
    <property type="term" value="F:type 5 melanocortin receptor binding"/>
    <property type="evidence" value="ECO:0000353"/>
    <property type="project" value="BHF-UCL"/>
</dbReference>
<dbReference type="GO" id="GO:0097009">
    <property type="term" value="P:energy homeostasis"/>
    <property type="evidence" value="ECO:0000250"/>
    <property type="project" value="UniProtKB"/>
</dbReference>
<dbReference type="GO" id="GO:0006112">
    <property type="term" value="P:energy reserve metabolic process"/>
    <property type="evidence" value="ECO:0000250"/>
    <property type="project" value="UniProtKB"/>
</dbReference>
<dbReference type="GO" id="GO:0007631">
    <property type="term" value="P:feeding behavior"/>
    <property type="evidence" value="ECO:0000250"/>
    <property type="project" value="UniProtKB"/>
</dbReference>
<dbReference type="GO" id="GO:0106072">
    <property type="term" value="P:negative regulation of adenylate cyclase-activating G protein-coupled receptor signaling pathway"/>
    <property type="evidence" value="ECO:0000314"/>
    <property type="project" value="BHF-UCL"/>
</dbReference>
<dbReference type="GO" id="GO:1903077">
    <property type="term" value="P:negative regulation of protein localization to plasma membrane"/>
    <property type="evidence" value="ECO:0000314"/>
    <property type="project" value="BHF-UCL"/>
</dbReference>
<dbReference type="GO" id="GO:0106071">
    <property type="term" value="P:positive regulation of adenylate cyclase-activating G protein-coupled receptor signaling pathway"/>
    <property type="evidence" value="ECO:0000314"/>
    <property type="project" value="BHF-UCL"/>
</dbReference>
<dbReference type="GO" id="GO:0072659">
    <property type="term" value="P:protein localization to plasma membrane"/>
    <property type="evidence" value="ECO:0000314"/>
    <property type="project" value="BHF-UCL"/>
</dbReference>
<dbReference type="GO" id="GO:0106070">
    <property type="term" value="P:regulation of adenylate cyclase-activating G protein-coupled receptor signaling pathway"/>
    <property type="evidence" value="ECO:0000318"/>
    <property type="project" value="GO_Central"/>
</dbReference>
<dbReference type="InterPro" id="IPR028111">
    <property type="entry name" value="MRAP"/>
</dbReference>
<dbReference type="PANTHER" id="PTHR28675">
    <property type="entry name" value="MELANOCORTIN-2 RECEPTOR ACCESSORY PROTEIN 2"/>
    <property type="match status" value="1"/>
</dbReference>
<dbReference type="PANTHER" id="PTHR28675:SF1">
    <property type="entry name" value="MELANOCORTIN-2 RECEPTOR ACCESSORY PROTEIN 2"/>
    <property type="match status" value="1"/>
</dbReference>
<dbReference type="Pfam" id="PF15183">
    <property type="entry name" value="MRAP"/>
    <property type="match status" value="1"/>
</dbReference>
<keyword id="KW-1003">Cell membrane</keyword>
<keyword id="KW-0256">Endoplasmic reticulum</keyword>
<keyword id="KW-0325">Glycoprotein</keyword>
<keyword id="KW-0472">Membrane</keyword>
<keyword id="KW-0550">Obesity</keyword>
<keyword id="KW-0597">Phosphoprotein</keyword>
<keyword id="KW-1267">Proteomics identification</keyword>
<keyword id="KW-1185">Reference proteome</keyword>
<keyword id="KW-0812">Transmembrane</keyword>
<keyword id="KW-1133">Transmembrane helix</keyword>
<comment type="function">
    <text evidence="1 3 4">Modulator of melanocortin receptor 4 (MC4R), a receptor involved in energy homeostasis. Plays a central role in the control of energy homeostasis and body weight regulation by increasing ligand-sensitivity of MC4R and MC4R-mediated generation of cAMP (By similarity). May also act as a negative regulator of MC2R: competes with MRAP for binding to MC2R and impairs the binding of corticotropin (ACTH) to MC2R. May also regulate activity of other melanocortin receptors (MC1R, MC3R and MC5R); however, additional evidence is required in vivo.</text>
</comment>
<comment type="subunit">
    <text evidence="3 4">Homodimer and heterodimer. Forms antiparallel homodimers and heterodimers with MRAP. Interacts with MC1R, MC2R, MC3R, MC4R and MC5R.</text>
</comment>
<comment type="interaction">
    <interactant intactId="EBI-9537218">
        <id>Q96G30</id>
    </interactant>
    <interactant intactId="EBI-2606935">
        <id>Q96BI3</id>
        <label>APH1A</label>
    </interactant>
    <organismsDiffer>false</organismsDiffer>
    <experiments>3</experiments>
</comment>
<comment type="interaction">
    <interactant intactId="EBI-9537218">
        <id>Q96G30</id>
    </interactant>
    <interactant intactId="EBI-12275524">
        <id>P23560-2</id>
        <label>BDNF</label>
    </interactant>
    <organismsDiffer>false</organismsDiffer>
    <experiments>3</experiments>
</comment>
<comment type="interaction">
    <interactant intactId="EBI-9537218">
        <id>Q96G30</id>
    </interactant>
    <interactant intactId="EBI-1266923">
        <id>Q6UXK2</id>
        <label>ISLR2</label>
    </interactant>
    <organismsDiffer>false</organismsDiffer>
    <experiments>3</experiments>
</comment>
<comment type="interaction">
    <interactant intactId="EBI-9537218">
        <id>Q96G30</id>
    </interactant>
    <interactant intactId="EBI-9537171">
        <id>Q01718</id>
        <label>MC2R</label>
    </interactant>
    <organismsDiffer>false</organismsDiffer>
    <experiments>2</experiments>
</comment>
<comment type="interaction">
    <interactant intactId="EBI-9537218">
        <id>Q96G30</id>
    </interactant>
    <interactant intactId="EBI-9538727">
        <id>Q8TCY5</id>
        <label>MRAP</label>
    </interactant>
    <organismsDiffer>false</organismsDiffer>
    <experiments>3</experiments>
</comment>
<comment type="interaction">
    <interactant intactId="EBI-9537218">
        <id>Q96G30</id>
    </interactant>
    <interactant intactId="EBI-9537218">
        <id>Q96G30</id>
        <label>MRAP2</label>
    </interactant>
    <organismsDiffer>false</organismsDiffer>
    <experiments>3</experiments>
</comment>
<comment type="interaction">
    <interactant intactId="EBI-9537218">
        <id>Q96G30</id>
    </interactant>
    <interactant intactId="EBI-347996">
        <id>O43765</id>
        <label>SGTA</label>
    </interactant>
    <organismsDiffer>false</organismsDiffer>
    <experiments>6</experiments>
</comment>
<comment type="interaction">
    <interactant intactId="EBI-9537218">
        <id>Q96G30</id>
    </interactant>
    <interactant intactId="EBI-11742770">
        <id>Q96HE8</id>
        <label>TMEM80</label>
    </interactant>
    <organismsDiffer>false</organismsDiffer>
    <experiments>3</experiments>
</comment>
<comment type="subcellular location">
    <subcellularLocation>
        <location evidence="3">Cell membrane</location>
        <topology evidence="3">Single-pass membrane protein</topology>
    </subcellularLocation>
    <subcellularLocation>
        <location evidence="3">Endoplasmic reticulum membrane</location>
        <topology evidence="3">Single-pass membrane protein</topology>
    </subcellularLocation>
    <text evidence="4">The formation of antiparallel homo- and heterodimers suggest that N- and C-terminus can both localize in the cytoplasmic and extracellular parts, depending on the context.</text>
</comment>
<comment type="tissue specificity">
    <text evidence="3">Expressed in the adrenal gland and brain. Not expressed in other tissues.</text>
</comment>
<comment type="polymorphism">
    <text evidence="5">Genetic variations in MRAP2 define the body mass index quantitative trait locus 18 (BMIQ18) [MIM:615457]. Variance in body mass index is a susceptibility factor for obesity.</text>
</comment>
<comment type="disease" evidence="5">
    <disease id="DI-01221">
        <name>Obesity</name>
        <acronym>OBESITY</acronym>
        <description>A condition characterized by an increase of body weight beyond the limitation of skeletal and physical requirements, as the result of excessive accumulation of body fat.</description>
        <dbReference type="MIM" id="601665"/>
    </disease>
    <text>Disease susceptibility may be associated with variants affecting the gene represented in this entry.</text>
</comment>
<comment type="similarity">
    <text evidence="6">Belongs to the MRAP family.</text>
</comment>
<proteinExistence type="evidence at protein level"/>
<feature type="chain" id="PRO_0000089522" description="Melanocortin-2 receptor accessory protein 2">
    <location>
        <begin position="1"/>
        <end position="205"/>
    </location>
</feature>
<feature type="transmembrane region" description="Helical" evidence="2">
    <location>
        <begin position="45"/>
        <end position="65"/>
    </location>
</feature>
<feature type="modified residue" description="Phosphoserine" evidence="7">
    <location>
        <position position="89"/>
    </location>
</feature>
<feature type="glycosylation site" description="N-linked (GlcNAc...) asparagine" evidence="3">
    <location>
        <position position="9"/>
    </location>
</feature>
<feature type="sequence variant" id="VAR_069986" description="Found in a patient with obesity; uncertain significance; dbSNP:rs761868293." evidence="5">
    <original>N</original>
    <variation>Y</variation>
    <location>
        <position position="88"/>
    </location>
</feature>
<feature type="sequence variant" id="VAR_069987" description="Found in a patient with obesity; uncertain significance; dbSNP:rs368589399." evidence="5">
    <original>L</original>
    <variation>V</variation>
    <location>
        <position position="115"/>
    </location>
</feature>
<feature type="sequence variant" id="VAR_069988" description="Found in a patient with obesity; uncertain significance; dbSNP:rs148904867." evidence="5">
    <original>R</original>
    <variation>C</variation>
    <location>
        <position position="125"/>
    </location>
</feature>
<feature type="mutagenesis site" description="Abolishes N-glycosylation." evidence="3">
    <original>N</original>
    <variation>Q</variation>
    <location>
        <position position="9"/>
    </location>
</feature>
<feature type="sequence conflict" description="In Ref. 1; BAC03517." evidence="6" ref="1">
    <original>F</original>
    <variation>I</variation>
    <location>
        <position position="62"/>
    </location>
</feature>
<organism>
    <name type="scientific">Homo sapiens</name>
    <name type="common">Human</name>
    <dbReference type="NCBI Taxonomy" id="9606"/>
    <lineage>
        <taxon>Eukaryota</taxon>
        <taxon>Metazoa</taxon>
        <taxon>Chordata</taxon>
        <taxon>Craniata</taxon>
        <taxon>Vertebrata</taxon>
        <taxon>Euteleostomi</taxon>
        <taxon>Mammalia</taxon>
        <taxon>Eutheria</taxon>
        <taxon>Euarchontoglires</taxon>
        <taxon>Primates</taxon>
        <taxon>Haplorrhini</taxon>
        <taxon>Catarrhini</taxon>
        <taxon>Hominidae</taxon>
        <taxon>Homo</taxon>
    </lineage>
</organism>
<gene>
    <name type="primary">MRAP2</name>
    <name type="synonym">C6orf117</name>
</gene>
<reference key="1">
    <citation type="journal article" date="2004" name="Nat. Genet.">
        <title>Complete sequencing and characterization of 21,243 full-length human cDNAs.</title>
        <authorList>
            <person name="Ota T."/>
            <person name="Suzuki Y."/>
            <person name="Nishikawa T."/>
            <person name="Otsuki T."/>
            <person name="Sugiyama T."/>
            <person name="Irie R."/>
            <person name="Wakamatsu A."/>
            <person name="Hayashi K."/>
            <person name="Sato H."/>
            <person name="Nagai K."/>
            <person name="Kimura K."/>
            <person name="Makita H."/>
            <person name="Sekine M."/>
            <person name="Obayashi M."/>
            <person name="Nishi T."/>
            <person name="Shibahara T."/>
            <person name="Tanaka T."/>
            <person name="Ishii S."/>
            <person name="Yamamoto J."/>
            <person name="Saito K."/>
            <person name="Kawai Y."/>
            <person name="Isono Y."/>
            <person name="Nakamura Y."/>
            <person name="Nagahari K."/>
            <person name="Murakami K."/>
            <person name="Yasuda T."/>
            <person name="Iwayanagi T."/>
            <person name="Wagatsuma M."/>
            <person name="Shiratori A."/>
            <person name="Sudo H."/>
            <person name="Hosoiri T."/>
            <person name="Kaku Y."/>
            <person name="Kodaira H."/>
            <person name="Kondo H."/>
            <person name="Sugawara M."/>
            <person name="Takahashi M."/>
            <person name="Kanda K."/>
            <person name="Yokoi T."/>
            <person name="Furuya T."/>
            <person name="Kikkawa E."/>
            <person name="Omura Y."/>
            <person name="Abe K."/>
            <person name="Kamihara K."/>
            <person name="Katsuta N."/>
            <person name="Sato K."/>
            <person name="Tanikawa M."/>
            <person name="Yamazaki M."/>
            <person name="Ninomiya K."/>
            <person name="Ishibashi T."/>
            <person name="Yamashita H."/>
            <person name="Murakawa K."/>
            <person name="Fujimori K."/>
            <person name="Tanai H."/>
            <person name="Kimata M."/>
            <person name="Watanabe M."/>
            <person name="Hiraoka S."/>
            <person name="Chiba Y."/>
            <person name="Ishida S."/>
            <person name="Ono Y."/>
            <person name="Takiguchi S."/>
            <person name="Watanabe S."/>
            <person name="Yosida M."/>
            <person name="Hotuta T."/>
            <person name="Kusano J."/>
            <person name="Kanehori K."/>
            <person name="Takahashi-Fujii A."/>
            <person name="Hara H."/>
            <person name="Tanase T.-O."/>
            <person name="Nomura Y."/>
            <person name="Togiya S."/>
            <person name="Komai F."/>
            <person name="Hara R."/>
            <person name="Takeuchi K."/>
            <person name="Arita M."/>
            <person name="Imose N."/>
            <person name="Musashino K."/>
            <person name="Yuuki H."/>
            <person name="Oshima A."/>
            <person name="Sasaki N."/>
            <person name="Aotsuka S."/>
            <person name="Yoshikawa Y."/>
            <person name="Matsunawa H."/>
            <person name="Ichihara T."/>
            <person name="Shiohata N."/>
            <person name="Sano S."/>
            <person name="Moriya S."/>
            <person name="Momiyama H."/>
            <person name="Satoh N."/>
            <person name="Takami S."/>
            <person name="Terashima Y."/>
            <person name="Suzuki O."/>
            <person name="Nakagawa S."/>
            <person name="Senoh A."/>
            <person name="Mizoguchi H."/>
            <person name="Goto Y."/>
            <person name="Shimizu F."/>
            <person name="Wakebe H."/>
            <person name="Hishigaki H."/>
            <person name="Watanabe T."/>
            <person name="Sugiyama A."/>
            <person name="Takemoto M."/>
            <person name="Kawakami B."/>
            <person name="Yamazaki M."/>
            <person name="Watanabe K."/>
            <person name="Kumagai A."/>
            <person name="Itakura S."/>
            <person name="Fukuzumi Y."/>
            <person name="Fujimori Y."/>
            <person name="Komiyama M."/>
            <person name="Tashiro H."/>
            <person name="Tanigami A."/>
            <person name="Fujiwara T."/>
            <person name="Ono T."/>
            <person name="Yamada K."/>
            <person name="Fujii Y."/>
            <person name="Ozaki K."/>
            <person name="Hirao M."/>
            <person name="Ohmori Y."/>
            <person name="Kawabata A."/>
            <person name="Hikiji T."/>
            <person name="Kobatake N."/>
            <person name="Inagaki H."/>
            <person name="Ikema Y."/>
            <person name="Okamoto S."/>
            <person name="Okitani R."/>
            <person name="Kawakami T."/>
            <person name="Noguchi S."/>
            <person name="Itoh T."/>
            <person name="Shigeta K."/>
            <person name="Senba T."/>
            <person name="Matsumura K."/>
            <person name="Nakajima Y."/>
            <person name="Mizuno T."/>
            <person name="Morinaga M."/>
            <person name="Sasaki M."/>
            <person name="Togashi T."/>
            <person name="Oyama M."/>
            <person name="Hata H."/>
            <person name="Watanabe M."/>
            <person name="Komatsu T."/>
            <person name="Mizushima-Sugano J."/>
            <person name="Satoh T."/>
            <person name="Shirai Y."/>
            <person name="Takahashi Y."/>
            <person name="Nakagawa K."/>
            <person name="Okumura K."/>
            <person name="Nagase T."/>
            <person name="Nomura N."/>
            <person name="Kikuchi H."/>
            <person name="Masuho Y."/>
            <person name="Yamashita R."/>
            <person name="Nakai K."/>
            <person name="Yada T."/>
            <person name="Nakamura Y."/>
            <person name="Ohara O."/>
            <person name="Isogai T."/>
            <person name="Sugano S."/>
        </authorList>
    </citation>
    <scope>NUCLEOTIDE SEQUENCE [LARGE SCALE MRNA]</scope>
    <source>
        <tissue>Amygdala</tissue>
        <tissue>Kidney</tissue>
    </source>
</reference>
<reference key="2">
    <citation type="journal article" date="2003" name="Nature">
        <title>The DNA sequence and analysis of human chromosome 6.</title>
        <authorList>
            <person name="Mungall A.J."/>
            <person name="Palmer S.A."/>
            <person name="Sims S.K."/>
            <person name="Edwards C.A."/>
            <person name="Ashurst J.L."/>
            <person name="Wilming L."/>
            <person name="Jones M.C."/>
            <person name="Horton R."/>
            <person name="Hunt S.E."/>
            <person name="Scott C.E."/>
            <person name="Gilbert J.G.R."/>
            <person name="Clamp M.E."/>
            <person name="Bethel G."/>
            <person name="Milne S."/>
            <person name="Ainscough R."/>
            <person name="Almeida J.P."/>
            <person name="Ambrose K.D."/>
            <person name="Andrews T.D."/>
            <person name="Ashwell R.I.S."/>
            <person name="Babbage A.K."/>
            <person name="Bagguley C.L."/>
            <person name="Bailey J."/>
            <person name="Banerjee R."/>
            <person name="Barker D.J."/>
            <person name="Barlow K.F."/>
            <person name="Bates K."/>
            <person name="Beare D.M."/>
            <person name="Beasley H."/>
            <person name="Beasley O."/>
            <person name="Bird C.P."/>
            <person name="Blakey S.E."/>
            <person name="Bray-Allen S."/>
            <person name="Brook J."/>
            <person name="Brown A.J."/>
            <person name="Brown J.Y."/>
            <person name="Burford D.C."/>
            <person name="Burrill W."/>
            <person name="Burton J."/>
            <person name="Carder C."/>
            <person name="Carter N.P."/>
            <person name="Chapman J.C."/>
            <person name="Clark S.Y."/>
            <person name="Clark G."/>
            <person name="Clee C.M."/>
            <person name="Clegg S."/>
            <person name="Cobley V."/>
            <person name="Collier R.E."/>
            <person name="Collins J.E."/>
            <person name="Colman L.K."/>
            <person name="Corby N.R."/>
            <person name="Coville G.J."/>
            <person name="Culley K.M."/>
            <person name="Dhami P."/>
            <person name="Davies J."/>
            <person name="Dunn M."/>
            <person name="Earthrowl M.E."/>
            <person name="Ellington A.E."/>
            <person name="Evans K.A."/>
            <person name="Faulkner L."/>
            <person name="Francis M.D."/>
            <person name="Frankish A."/>
            <person name="Frankland J."/>
            <person name="French L."/>
            <person name="Garner P."/>
            <person name="Garnett J."/>
            <person name="Ghori M.J."/>
            <person name="Gilby L.M."/>
            <person name="Gillson C.J."/>
            <person name="Glithero R.J."/>
            <person name="Grafham D.V."/>
            <person name="Grant M."/>
            <person name="Gribble S."/>
            <person name="Griffiths C."/>
            <person name="Griffiths M.N.D."/>
            <person name="Hall R."/>
            <person name="Halls K.S."/>
            <person name="Hammond S."/>
            <person name="Harley J.L."/>
            <person name="Hart E.A."/>
            <person name="Heath P.D."/>
            <person name="Heathcott R."/>
            <person name="Holmes S.J."/>
            <person name="Howden P.J."/>
            <person name="Howe K.L."/>
            <person name="Howell G.R."/>
            <person name="Huckle E."/>
            <person name="Humphray S.J."/>
            <person name="Humphries M.D."/>
            <person name="Hunt A.R."/>
            <person name="Johnson C.M."/>
            <person name="Joy A.A."/>
            <person name="Kay M."/>
            <person name="Keenan S.J."/>
            <person name="Kimberley A.M."/>
            <person name="King A."/>
            <person name="Laird G.K."/>
            <person name="Langford C."/>
            <person name="Lawlor S."/>
            <person name="Leongamornlert D.A."/>
            <person name="Leversha M."/>
            <person name="Lloyd C.R."/>
            <person name="Lloyd D.M."/>
            <person name="Loveland J.E."/>
            <person name="Lovell J."/>
            <person name="Martin S."/>
            <person name="Mashreghi-Mohammadi M."/>
            <person name="Maslen G.L."/>
            <person name="Matthews L."/>
            <person name="McCann O.T."/>
            <person name="McLaren S.J."/>
            <person name="McLay K."/>
            <person name="McMurray A."/>
            <person name="Moore M.J.F."/>
            <person name="Mullikin J.C."/>
            <person name="Niblett D."/>
            <person name="Nickerson T."/>
            <person name="Novik K.L."/>
            <person name="Oliver K."/>
            <person name="Overton-Larty E.K."/>
            <person name="Parker A."/>
            <person name="Patel R."/>
            <person name="Pearce A.V."/>
            <person name="Peck A.I."/>
            <person name="Phillimore B.J.C.T."/>
            <person name="Phillips S."/>
            <person name="Plumb R.W."/>
            <person name="Porter K.M."/>
            <person name="Ramsey Y."/>
            <person name="Ranby S.A."/>
            <person name="Rice C.M."/>
            <person name="Ross M.T."/>
            <person name="Searle S.M."/>
            <person name="Sehra H.K."/>
            <person name="Sheridan E."/>
            <person name="Skuce C.D."/>
            <person name="Smith S."/>
            <person name="Smith M."/>
            <person name="Spraggon L."/>
            <person name="Squares S.L."/>
            <person name="Steward C.A."/>
            <person name="Sycamore N."/>
            <person name="Tamlyn-Hall G."/>
            <person name="Tester J."/>
            <person name="Theaker A.J."/>
            <person name="Thomas D.W."/>
            <person name="Thorpe A."/>
            <person name="Tracey A."/>
            <person name="Tromans A."/>
            <person name="Tubby B."/>
            <person name="Wall M."/>
            <person name="Wallis J.M."/>
            <person name="West A.P."/>
            <person name="White S.S."/>
            <person name="Whitehead S.L."/>
            <person name="Whittaker H."/>
            <person name="Wild A."/>
            <person name="Willey D.J."/>
            <person name="Wilmer T.E."/>
            <person name="Wood J.M."/>
            <person name="Wray P.W."/>
            <person name="Wyatt J.C."/>
            <person name="Young L."/>
            <person name="Younger R.M."/>
            <person name="Bentley D.R."/>
            <person name="Coulson A."/>
            <person name="Durbin R.M."/>
            <person name="Hubbard T."/>
            <person name="Sulston J.E."/>
            <person name="Dunham I."/>
            <person name="Rogers J."/>
            <person name="Beck S."/>
        </authorList>
    </citation>
    <scope>NUCLEOTIDE SEQUENCE [LARGE SCALE GENOMIC DNA]</scope>
</reference>
<reference key="3">
    <citation type="submission" date="2005-09" db="EMBL/GenBank/DDBJ databases">
        <authorList>
            <person name="Mural R.J."/>
            <person name="Istrail S."/>
            <person name="Sutton G.G."/>
            <person name="Florea L."/>
            <person name="Halpern A.L."/>
            <person name="Mobarry C.M."/>
            <person name="Lippert R."/>
            <person name="Walenz B."/>
            <person name="Shatkay H."/>
            <person name="Dew I."/>
            <person name="Miller J.R."/>
            <person name="Flanigan M.J."/>
            <person name="Edwards N.J."/>
            <person name="Bolanos R."/>
            <person name="Fasulo D."/>
            <person name="Halldorsson B.V."/>
            <person name="Hannenhalli S."/>
            <person name="Turner R."/>
            <person name="Yooseph S."/>
            <person name="Lu F."/>
            <person name="Nusskern D.R."/>
            <person name="Shue B.C."/>
            <person name="Zheng X.H."/>
            <person name="Zhong F."/>
            <person name="Delcher A.L."/>
            <person name="Huson D.H."/>
            <person name="Kravitz S.A."/>
            <person name="Mouchard L."/>
            <person name="Reinert K."/>
            <person name="Remington K.A."/>
            <person name="Clark A.G."/>
            <person name="Waterman M.S."/>
            <person name="Eichler E.E."/>
            <person name="Adams M.D."/>
            <person name="Hunkapiller M.W."/>
            <person name="Myers E.W."/>
            <person name="Venter J.C."/>
        </authorList>
    </citation>
    <scope>NUCLEOTIDE SEQUENCE [LARGE SCALE GENOMIC DNA]</scope>
</reference>
<reference key="4">
    <citation type="journal article" date="2004" name="Genome Res.">
        <title>The status, quality, and expansion of the NIH full-length cDNA project: the Mammalian Gene Collection (MGC).</title>
        <authorList>
            <consortium name="The MGC Project Team"/>
        </authorList>
    </citation>
    <scope>NUCLEOTIDE SEQUENCE [LARGE SCALE MRNA]</scope>
    <source>
        <tissue>Brain</tissue>
        <tissue>Colon</tissue>
    </source>
</reference>
<reference key="5">
    <citation type="journal article" date="2009" name="Proc. Natl. Acad. Sci. U.S.A.">
        <title>MRAP and MRAP2 are bidirectional regulators of the melanocortin receptor family.</title>
        <authorList>
            <person name="Chan L.F."/>
            <person name="Webb T.R."/>
            <person name="Chung T.T."/>
            <person name="Meimaridou E."/>
            <person name="Cooray S.N."/>
            <person name="Guasti L."/>
            <person name="Chapple J.P."/>
            <person name="Egertova M."/>
            <person name="Elphick M.R."/>
            <person name="Cheetham M.E."/>
            <person name="Metherell L.A."/>
            <person name="Clark A.J."/>
        </authorList>
    </citation>
    <scope>FUNCTION</scope>
    <scope>SUBCELLULAR LOCATION</scope>
    <scope>SUBUNIT</scope>
    <scope>GLYCOSYLATION AT ASN-9</scope>
    <scope>INTERACTION WITH MC1R; MC2R; MC3R; MC4R; MC5R AND MRAP</scope>
    <scope>TISSUE SPECIFICITY</scope>
    <scope>MUTAGENESIS OF ASN-9</scope>
</reference>
<reference key="6">
    <citation type="journal article" date="2010" name="Sci. Signal.">
        <title>Regulation of G protein-coupled receptor signaling: specific dominant-negative effects of melanocortin 2 receptor accessory protein 2.</title>
        <authorList>
            <person name="Sebag J.A."/>
            <person name="Hinkle P.M."/>
        </authorList>
    </citation>
    <scope>FUNCTION</scope>
    <scope>SUBUNIT</scope>
    <scope>TOPOLOGY</scope>
    <scope>INTERACTION WITH MRAP</scope>
</reference>
<reference key="7">
    <citation type="journal article" date="2013" name="J. Proteome Res.">
        <title>Toward a comprehensive characterization of a human cancer cell phosphoproteome.</title>
        <authorList>
            <person name="Zhou H."/>
            <person name="Di Palma S."/>
            <person name="Preisinger C."/>
            <person name="Peng M."/>
            <person name="Polat A.N."/>
            <person name="Heck A.J."/>
            <person name="Mohammed S."/>
        </authorList>
    </citation>
    <scope>PHOSPHORYLATION [LARGE SCALE ANALYSIS] AT SER-89</scope>
    <scope>IDENTIFICATION BY MASS SPECTROMETRY [LARGE SCALE ANALYSIS]</scope>
    <source>
        <tissue>Erythroleukemia</tissue>
    </source>
</reference>
<reference key="8">
    <citation type="journal article" date="2013" name="Science">
        <title>Loss of function of the melanocortin 2 receptor accessory protein 2 is associated with mammalian obesity.</title>
        <authorList>
            <person name="Asai M."/>
            <person name="Ramachandrappa S."/>
            <person name="Joachim M."/>
            <person name="Shen Y."/>
            <person name="Zhang R."/>
            <person name="Nuthalapati N."/>
            <person name="Ramanathan V."/>
            <person name="Strochlic D.E."/>
            <person name="Ferket P."/>
            <person name="Linhart K."/>
            <person name="Ho C."/>
            <person name="Novoselova T.V."/>
            <person name="Garg S."/>
            <person name="Ridderstrale M."/>
            <person name="Marcus C."/>
            <person name="Hirschhorn J.N."/>
            <person name="Keogh J.M."/>
            <person name="O'Rahilly S."/>
            <person name="Chan L.F."/>
            <person name="Clark A.J."/>
            <person name="Farooqi I.S."/>
            <person name="Majzoub J.A."/>
        </authorList>
    </citation>
    <scope>POLYMORPHISM</scope>
    <scope>INVOLVEMENT IN OBESITY</scope>
    <scope>VARIANTS TYR-88; VAL-115 AND CYS-125</scope>
</reference>
<accession>Q96G30</accession>
<accession>A8K9M1</accession>
<accession>Q8IXM9</accession>
<accession>Q8N2D1</accession>
<protein>
    <recommendedName>
        <fullName>Melanocortin-2 receptor accessory protein 2</fullName>
        <shortName>MC2R accessory protein 2</shortName>
    </recommendedName>
</protein>
<sequence>MSAQRLISNRTSQQSASNSDYTWEYEYYEIGPVSFEGLKAHKYSIVIGFWVGLAVFVIFMFFVLTLLTKTGAPHQDNAESSEKRFRMNSFVSDFGRPLEPDKVFSRQGNEESRSLFHCYINEVERLDRAKACHQTTALDSDVQLQEAIRSSGQPEEELNRLMKFDIPNFVNTDQNYFGEDDLLISEPPIVLETKPLSQTSHKDLD</sequence>
<name>MRAP2_HUMAN</name>